<sequence length="263" mass="29992">MSYYIPPKVWSAEESNQGKFSAINRPTAGSRFDQKLPQGDKPLQVYSLGTPNGLKVAVMLEELRELGVKEADYDLFKISIMDGDQFGSDFVAINPNSKIPSLLDKSNREAIRVFESGSILLYLADKFNHLIPVDWAQRTEVLNWLFWQMGAAPFVGGGFGHFFSYAPEKLEYPINRFTMETKRQLDLLNKELANKPYIAGEDYTIADIAIWSWYGRLAQDALYEGAYKFLALGTYQHLLDWTERIAQRPAVKRALEVDYKAIK</sequence>
<keyword id="KW-1185">Reference proteome</keyword>
<keyword id="KW-0808">Transferase</keyword>
<evidence type="ECO:0000250" key="1"/>
<evidence type="ECO:0000305" key="2"/>
<evidence type="ECO:0000305" key="3">
    <source>
    </source>
</evidence>
<gene>
    <name type="ordered locus">SMU_1296</name>
</gene>
<dbReference type="EC" id="2.-.-.-"/>
<dbReference type="EMBL" id="AE014133">
    <property type="protein sequence ID" value="AAN58973.1"/>
    <property type="molecule type" value="Genomic_DNA"/>
</dbReference>
<dbReference type="RefSeq" id="NP_721667.1">
    <property type="nucleotide sequence ID" value="NC_004350.2"/>
</dbReference>
<dbReference type="SMR" id="Q8DTN7"/>
<dbReference type="STRING" id="210007.SMU_1296"/>
<dbReference type="KEGG" id="smu:SMU_1296"/>
<dbReference type="PATRIC" id="fig|210007.7.peg.1161"/>
<dbReference type="eggNOG" id="COG0625">
    <property type="taxonomic scope" value="Bacteria"/>
</dbReference>
<dbReference type="HOGENOM" id="CLU_011226_14_4_9"/>
<dbReference type="OrthoDB" id="9770408at2"/>
<dbReference type="PhylomeDB" id="Q8DTN7"/>
<dbReference type="Proteomes" id="UP000002512">
    <property type="component" value="Chromosome"/>
</dbReference>
<dbReference type="GO" id="GO:0016740">
    <property type="term" value="F:transferase activity"/>
    <property type="evidence" value="ECO:0007669"/>
    <property type="project" value="UniProtKB-KW"/>
</dbReference>
<dbReference type="CDD" id="cd03048">
    <property type="entry name" value="GST_N_Ure2p_like"/>
    <property type="match status" value="1"/>
</dbReference>
<dbReference type="Gene3D" id="1.20.1050.10">
    <property type="match status" value="1"/>
</dbReference>
<dbReference type="Gene3D" id="3.40.30.10">
    <property type="entry name" value="Glutaredoxin"/>
    <property type="match status" value="1"/>
</dbReference>
<dbReference type="InterPro" id="IPR010987">
    <property type="entry name" value="Glutathione-S-Trfase_C-like"/>
</dbReference>
<dbReference type="InterPro" id="IPR036282">
    <property type="entry name" value="Glutathione-S-Trfase_C_sf"/>
</dbReference>
<dbReference type="InterPro" id="IPR040079">
    <property type="entry name" value="Glutathione_S-Trfase"/>
</dbReference>
<dbReference type="InterPro" id="IPR004045">
    <property type="entry name" value="Glutathione_S-Trfase_N"/>
</dbReference>
<dbReference type="InterPro" id="IPR036249">
    <property type="entry name" value="Thioredoxin-like_sf"/>
</dbReference>
<dbReference type="NCBIfam" id="NF008731">
    <property type="entry name" value="PRK11752.1"/>
    <property type="match status" value="1"/>
</dbReference>
<dbReference type="PANTHER" id="PTHR44051:SF22">
    <property type="entry name" value="DISULFIDE-BOND OXIDOREDUCTASE YGHU"/>
    <property type="match status" value="1"/>
</dbReference>
<dbReference type="PANTHER" id="PTHR44051">
    <property type="entry name" value="GLUTATHIONE S-TRANSFERASE-RELATED"/>
    <property type="match status" value="1"/>
</dbReference>
<dbReference type="Pfam" id="PF13410">
    <property type="entry name" value="GST_C_2"/>
    <property type="match status" value="1"/>
</dbReference>
<dbReference type="Pfam" id="PF02798">
    <property type="entry name" value="GST_N"/>
    <property type="match status" value="1"/>
</dbReference>
<dbReference type="SFLD" id="SFLDS00019">
    <property type="entry name" value="Glutathione_Transferase_(cytos"/>
    <property type="match status" value="1"/>
</dbReference>
<dbReference type="SFLD" id="SFLDG01151">
    <property type="entry name" value="Main.2:_Nu-like"/>
    <property type="match status" value="1"/>
</dbReference>
<dbReference type="SUPFAM" id="SSF47616">
    <property type="entry name" value="GST C-terminal domain-like"/>
    <property type="match status" value="1"/>
</dbReference>
<dbReference type="SUPFAM" id="SSF52833">
    <property type="entry name" value="Thioredoxin-like"/>
    <property type="match status" value="1"/>
</dbReference>
<dbReference type="PROSITE" id="PS50405">
    <property type="entry name" value="GST_CTER"/>
    <property type="match status" value="1"/>
</dbReference>
<dbReference type="PROSITE" id="PS50404">
    <property type="entry name" value="GST_NTER"/>
    <property type="match status" value="1"/>
</dbReference>
<organism>
    <name type="scientific">Streptococcus mutans serotype c (strain ATCC 700610 / UA159)</name>
    <dbReference type="NCBI Taxonomy" id="210007"/>
    <lineage>
        <taxon>Bacteria</taxon>
        <taxon>Bacillati</taxon>
        <taxon>Bacillota</taxon>
        <taxon>Bacilli</taxon>
        <taxon>Lactobacillales</taxon>
        <taxon>Streptococcaceae</taxon>
        <taxon>Streptococcus</taxon>
    </lineage>
</organism>
<proteinExistence type="inferred from homology"/>
<name>Y1296_STRMU</name>
<accession>Q8DTN7</accession>
<comment type="subunit">
    <text evidence="1">Homodimer.</text>
</comment>
<comment type="miscellaneous">
    <text evidence="3">Part of the SMU_1296-SMU_1298 operon.</text>
</comment>
<comment type="similarity">
    <text evidence="2">Belongs to the GST superfamily.</text>
</comment>
<protein>
    <recommendedName>
        <fullName>Uncharacterized GST-like protein SMU_1296</fullName>
        <ecNumber>2.-.-.-</ecNumber>
    </recommendedName>
</protein>
<feature type="chain" id="PRO_0000419757" description="Uncharacterized GST-like protein SMU_1296">
    <location>
        <begin position="1"/>
        <end position="263"/>
    </location>
</feature>
<feature type="domain" description="GST N-terminal">
    <location>
        <begin position="44"/>
        <end position="131"/>
    </location>
</feature>
<feature type="domain" description="GST C-terminal">
    <location>
        <begin position="134"/>
        <end position="263"/>
    </location>
</feature>
<reference key="1">
    <citation type="journal article" date="2002" name="Proc. Natl. Acad. Sci. U.S.A.">
        <title>Genome sequence of Streptococcus mutans UA159, a cariogenic dental pathogen.</title>
        <authorList>
            <person name="Ajdic D.J."/>
            <person name="McShan W.M."/>
            <person name="McLaughlin R.E."/>
            <person name="Savic G."/>
            <person name="Chang J."/>
            <person name="Carson M.B."/>
            <person name="Primeaux C."/>
            <person name="Tian R."/>
            <person name="Kenton S."/>
            <person name="Jia H.G."/>
            <person name="Lin S.P."/>
            <person name="Qian Y."/>
            <person name="Li S."/>
            <person name="Zhu H."/>
            <person name="Najar F.Z."/>
            <person name="Lai H."/>
            <person name="White J."/>
            <person name="Roe B.A."/>
            <person name="Ferretti J.J."/>
        </authorList>
    </citation>
    <scope>NUCLEOTIDE SEQUENCE [LARGE SCALE GENOMIC DNA]</scope>
    <source>
        <strain>ATCC 700610 / UA159</strain>
    </source>
</reference>
<reference key="2">
    <citation type="journal article" date="2009" name="J. Bacteriol.">
        <title>3'-Phosphoadenosine-5'-phosphate phosphatase activity is required for superoxide stress tolerance in Streptococcus mutans.</title>
        <authorList>
            <person name="Zhang J."/>
            <person name="Biswas I."/>
        </authorList>
    </citation>
    <scope>OPERON STRUCTURE</scope>
    <source>
        <strain>ATCC 700610 / UA159</strain>
    </source>
</reference>